<sequence>MGLLECCARCLVGAPFASLVATGLCFFGVALFCGCGHEALTGTEKLIETYFSKNYQDYEYLINVIHAFQYVIYGTASFFFLYGALLLAEGFYTTGAVRQIFGDYKTTICGKGLSATVTGGQKGRGSRGQHQAHSLERVCHCLGKWLGHPDKFVGITYALTVVWLLVFACSAVPVYIYFNTWTTCQSIAFPSKTSASIGSLCADARMYGVLPWNAFPGKVCGSNLLSICKTAEFQMTFHLFIAAFVGAAATLVSLLTFMIAATYNFAVLKLMGRGTKF</sequence>
<organism>
    <name type="scientific">Sus scrofa</name>
    <name type="common">Pig</name>
    <dbReference type="NCBI Taxonomy" id="9823"/>
    <lineage>
        <taxon>Eukaryota</taxon>
        <taxon>Metazoa</taxon>
        <taxon>Chordata</taxon>
        <taxon>Craniata</taxon>
        <taxon>Vertebrata</taxon>
        <taxon>Euteleostomi</taxon>
        <taxon>Mammalia</taxon>
        <taxon>Eutheria</taxon>
        <taxon>Laurasiatheria</taxon>
        <taxon>Artiodactyla</taxon>
        <taxon>Suina</taxon>
        <taxon>Suidae</taxon>
        <taxon>Sus</taxon>
    </lineage>
</organism>
<accession>Q712P7</accession>
<evidence type="ECO:0000250" key="1"/>
<evidence type="ECO:0000250" key="2">
    <source>
        <dbReference type="UniProtKB" id="P60201"/>
    </source>
</evidence>
<evidence type="ECO:0000250" key="3">
    <source>
        <dbReference type="UniProtKB" id="P60203"/>
    </source>
</evidence>
<evidence type="ECO:0000305" key="4"/>
<gene>
    <name type="primary">PLP1</name>
    <name type="synonym">PLP</name>
</gene>
<proteinExistence type="evidence at transcript level"/>
<name>MYPR_PIG</name>
<comment type="function">
    <text evidence="1">This is the major myelin protein from the central nervous system. It plays an important role in the formation or maintenance of the multilamellar structure of myelin (By similarity).</text>
</comment>
<comment type="subunit">
    <text evidence="2">Interacts with MAL.</text>
</comment>
<comment type="subcellular location">
    <subcellularLocation>
        <location evidence="1">Cell membrane</location>
        <topology evidence="1">Multi-pass membrane protein</topology>
    </subcellularLocation>
    <subcellularLocation>
        <location evidence="1">Myelin membrane</location>
    </subcellularLocation>
    <text evidence="1">Colocalizes with SIRT2 in internodal regions, at paranodal axoglial junction and Schmidt-Lanterman incisures of myelin sheat.</text>
</comment>
<comment type="similarity">
    <text evidence="4">Belongs to the myelin proteolipid protein family.</text>
</comment>
<dbReference type="EMBL" id="X73307">
    <property type="protein sequence ID" value="CAA51735.1"/>
    <property type="molecule type" value="mRNA"/>
</dbReference>
<dbReference type="EMBL" id="AJ009912">
    <property type="protein sequence ID" value="CAB51809.1"/>
    <property type="molecule type" value="Genomic_DNA"/>
</dbReference>
<dbReference type="RefSeq" id="NP_999139.1">
    <property type="nucleotide sequence ID" value="NM_213974.1"/>
</dbReference>
<dbReference type="SMR" id="Q712P7"/>
<dbReference type="FunCoup" id="Q712P7">
    <property type="interactions" value="210"/>
</dbReference>
<dbReference type="STRING" id="9823.ENSSSCP00000013328"/>
<dbReference type="PaxDb" id="9823-ENSSSCP00000013328"/>
<dbReference type="PeptideAtlas" id="Q712P7"/>
<dbReference type="Ensembl" id="ENSSSCT00000013705.6">
    <property type="protein sequence ID" value="ENSSSCP00000013328.4"/>
    <property type="gene ID" value="ENSSSCG00000012536.6"/>
</dbReference>
<dbReference type="Ensembl" id="ENSSSCT00040086369.1">
    <property type="protein sequence ID" value="ENSSSCP00040037867.1"/>
    <property type="gene ID" value="ENSSSCG00040062688.1"/>
</dbReference>
<dbReference type="Ensembl" id="ENSSSCT00045068654.1">
    <property type="protein sequence ID" value="ENSSSCP00045048872.1"/>
    <property type="gene ID" value="ENSSSCG00045039419.1"/>
</dbReference>
<dbReference type="Ensembl" id="ENSSSCT00055030702.1">
    <property type="protein sequence ID" value="ENSSSCP00055024442.1"/>
    <property type="gene ID" value="ENSSSCG00055015576.1"/>
</dbReference>
<dbReference type="Ensembl" id="ENSSSCT00070057901.1">
    <property type="protein sequence ID" value="ENSSSCP00070049224.1"/>
    <property type="gene ID" value="ENSSSCG00070028858.1"/>
</dbReference>
<dbReference type="Ensembl" id="ENSSSCT00085022252">
    <property type="protein sequence ID" value="ENSSSCP00085015369"/>
    <property type="gene ID" value="ENSSSCG00085011850"/>
</dbReference>
<dbReference type="Ensembl" id="ENSSSCT00105063215">
    <property type="protein sequence ID" value="ENSSSCP00105044954"/>
    <property type="gene ID" value="ENSSSCG00105033223"/>
</dbReference>
<dbReference type="Ensembl" id="ENSSSCT00110052719">
    <property type="protein sequence ID" value="ENSSSCP00110036776"/>
    <property type="gene ID" value="ENSSSCG00110027493"/>
</dbReference>
<dbReference type="Ensembl" id="ENSSSCT00115001802">
    <property type="protein sequence ID" value="ENSSSCP00115001674"/>
    <property type="gene ID" value="ENSSSCG00115001083"/>
</dbReference>
<dbReference type="Ensembl" id="ENSSSCT00130051550">
    <property type="protein sequence ID" value="ENSSSCP00130036650"/>
    <property type="gene ID" value="ENSSSCG00130026495"/>
</dbReference>
<dbReference type="GeneID" id="397029"/>
<dbReference type="KEGG" id="ssc:397029"/>
<dbReference type="CTD" id="5354"/>
<dbReference type="VGNC" id="VGNC:91569">
    <property type="gene designation" value="PLP1"/>
</dbReference>
<dbReference type="eggNOG" id="KOG4800">
    <property type="taxonomic scope" value="Eukaryota"/>
</dbReference>
<dbReference type="GeneTree" id="ENSGT00390000006915"/>
<dbReference type="InParanoid" id="Q712P7"/>
<dbReference type="OrthoDB" id="9993736at2759"/>
<dbReference type="TreeFam" id="TF315162"/>
<dbReference type="Proteomes" id="UP000008227">
    <property type="component" value="Chromosome X"/>
</dbReference>
<dbReference type="Proteomes" id="UP000314985">
    <property type="component" value="Unassembled WGS sequence"/>
</dbReference>
<dbReference type="Proteomes" id="UP000694570">
    <property type="component" value="Unplaced"/>
</dbReference>
<dbReference type="Proteomes" id="UP000694571">
    <property type="component" value="Unplaced"/>
</dbReference>
<dbReference type="Proteomes" id="UP000694720">
    <property type="component" value="Unplaced"/>
</dbReference>
<dbReference type="Proteomes" id="UP000694722">
    <property type="component" value="Unplaced"/>
</dbReference>
<dbReference type="Proteomes" id="UP000694723">
    <property type="component" value="Unplaced"/>
</dbReference>
<dbReference type="Proteomes" id="UP000694724">
    <property type="component" value="Unplaced"/>
</dbReference>
<dbReference type="Proteomes" id="UP000694725">
    <property type="component" value="Unplaced"/>
</dbReference>
<dbReference type="Proteomes" id="UP000694726">
    <property type="component" value="Unplaced"/>
</dbReference>
<dbReference type="Proteomes" id="UP000694727">
    <property type="component" value="Unplaced"/>
</dbReference>
<dbReference type="Proteomes" id="UP000694728">
    <property type="component" value="Unplaced"/>
</dbReference>
<dbReference type="GO" id="GO:0043209">
    <property type="term" value="C:myelin sheath"/>
    <property type="evidence" value="ECO:0007669"/>
    <property type="project" value="UniProtKB-SubCell"/>
</dbReference>
<dbReference type="GO" id="GO:0005886">
    <property type="term" value="C:plasma membrane"/>
    <property type="evidence" value="ECO:0000250"/>
    <property type="project" value="UniProtKB"/>
</dbReference>
<dbReference type="InterPro" id="IPR001614">
    <property type="entry name" value="Myelin_PLP"/>
</dbReference>
<dbReference type="InterPro" id="IPR018237">
    <property type="entry name" value="Myelin_PLP_CS"/>
</dbReference>
<dbReference type="PANTHER" id="PTHR11683">
    <property type="entry name" value="MYELIN PROTEOLIPID"/>
    <property type="match status" value="1"/>
</dbReference>
<dbReference type="PANTHER" id="PTHR11683:SF11">
    <property type="entry name" value="MYELIN PROTEOLIPID PROTEIN"/>
    <property type="match status" value="1"/>
</dbReference>
<dbReference type="Pfam" id="PF01275">
    <property type="entry name" value="Myelin_PLP"/>
    <property type="match status" value="1"/>
</dbReference>
<dbReference type="PRINTS" id="PR00214">
    <property type="entry name" value="MYELINPLP"/>
</dbReference>
<dbReference type="SMART" id="SM00002">
    <property type="entry name" value="PLP"/>
    <property type="match status" value="1"/>
</dbReference>
<dbReference type="PROSITE" id="PS00575">
    <property type="entry name" value="MYELIN_PLP_1"/>
    <property type="match status" value="1"/>
</dbReference>
<dbReference type="PROSITE" id="PS01004">
    <property type="entry name" value="MYELIN_PLP_2"/>
    <property type="match status" value="1"/>
</dbReference>
<feature type="chain" id="PRO_0000276758" description="Myelin proteolipid protein">
    <location>
        <begin position="1"/>
        <end position="277"/>
    </location>
</feature>
<feature type="topological domain" description="Cytoplasmic" evidence="4">
    <location>
        <begin position="1"/>
        <end position="9"/>
    </location>
</feature>
<feature type="transmembrane region" description="Helical; Name=1" evidence="4">
    <location>
        <begin position="10"/>
        <end position="36"/>
    </location>
</feature>
<feature type="topological domain" description="Extracellular" evidence="4">
    <location>
        <begin position="37"/>
        <end position="63"/>
    </location>
</feature>
<feature type="transmembrane region" description="Helical; Name=2" evidence="4">
    <location>
        <begin position="64"/>
        <end position="88"/>
    </location>
</feature>
<feature type="topological domain" description="Cytoplasmic" evidence="4">
    <location>
        <begin position="89"/>
        <end position="151"/>
    </location>
</feature>
<feature type="transmembrane region" description="Helical; Name=3" evidence="4">
    <location>
        <begin position="152"/>
        <end position="177"/>
    </location>
</feature>
<feature type="topological domain" description="Extracellular" evidence="4">
    <location>
        <begin position="178"/>
        <end position="233"/>
    </location>
</feature>
<feature type="transmembrane region" description="Helical; Name=4" evidence="4">
    <location>
        <begin position="234"/>
        <end position="260"/>
    </location>
</feature>
<feature type="topological domain" description="Cytoplasmic" evidence="4">
    <location>
        <begin position="261"/>
        <end position="277"/>
    </location>
</feature>
<feature type="modified residue" description="Phosphoserine" evidence="3">
    <location>
        <position position="114"/>
    </location>
</feature>
<feature type="modified residue" description="Phosphothreonine" evidence="3">
    <location>
        <position position="116"/>
    </location>
</feature>
<feature type="modified residue" description="Phosphothreonine" evidence="3">
    <location>
        <position position="118"/>
    </location>
</feature>
<feature type="lipid moiety-binding region" description="S-palmitoyl cysteine" evidence="1">
    <location>
        <position position="6"/>
    </location>
</feature>
<feature type="lipid moiety-binding region" description="S-palmitoyl cysteine" evidence="1">
    <location>
        <position position="7"/>
    </location>
</feature>
<feature type="lipid moiety-binding region" description="S-palmitoyl cysteine" evidence="1">
    <location>
        <position position="10"/>
    </location>
</feature>
<feature type="lipid moiety-binding region" description="S-palmitoyl cysteine" evidence="1">
    <location>
        <position position="109"/>
    </location>
</feature>
<feature type="lipid moiety-binding region" description="S-palmitoyl cysteine" evidence="1">
    <location>
        <position position="139"/>
    </location>
</feature>
<feature type="lipid moiety-binding region" description="S-palmitoyl cysteine" evidence="1">
    <location>
        <position position="141"/>
    </location>
</feature>
<feature type="disulfide bond" evidence="1">
    <location>
        <begin position="184"/>
        <end position="228"/>
    </location>
</feature>
<feature type="disulfide bond" evidence="1">
    <location>
        <begin position="201"/>
        <end position="220"/>
    </location>
</feature>
<reference key="1">
    <citation type="journal article" date="1999" name="Mamm. Genome">
        <title>Molecular analysis of the porcine proteolipid protein (PLP) gene.</title>
        <authorList>
            <person name="Baumgartner B.G."/>
            <person name="Deppe A."/>
            <person name="Rettenberger G."/>
            <person name="Leeb T."/>
            <person name="Hameister H."/>
            <person name="Brenig B."/>
        </authorList>
    </citation>
    <scope>NUCLEOTIDE SEQUENCE [GENOMIC DNA / MRNA]</scope>
    <source>
        <strain>German Landrace</strain>
        <tissue>Brain</tissue>
    </source>
</reference>
<keyword id="KW-1003">Cell membrane</keyword>
<keyword id="KW-1015">Disulfide bond</keyword>
<keyword id="KW-0449">Lipoprotein</keyword>
<keyword id="KW-0472">Membrane</keyword>
<keyword id="KW-0564">Palmitate</keyword>
<keyword id="KW-0597">Phosphoprotein</keyword>
<keyword id="KW-1185">Reference proteome</keyword>
<keyword id="KW-0812">Transmembrane</keyword>
<keyword id="KW-1133">Transmembrane helix</keyword>
<protein>
    <recommendedName>
        <fullName>Myelin proteolipid protein</fullName>
        <shortName>PLP</shortName>
    </recommendedName>
    <alternativeName>
        <fullName>Lipophilin</fullName>
    </alternativeName>
</protein>